<feature type="chain" id="PRO_0000067456" description="Squalene synthase">
    <location>
        <begin position="1"/>
        <end position="411"/>
    </location>
</feature>
<feature type="transmembrane region" description="Helical" evidence="2">
    <location>
        <begin position="281"/>
        <end position="301"/>
    </location>
</feature>
<feature type="transmembrane region" description="Helical" evidence="2">
    <location>
        <begin position="388"/>
        <end position="408"/>
    </location>
</feature>
<comment type="catalytic activity">
    <reaction>
        <text>2 (2E,6E)-farnesyl diphosphate + NADPH + H(+) = squalene + 2 diphosphate + NADP(+)</text>
        <dbReference type="Rhea" id="RHEA:32295"/>
        <dbReference type="ChEBI" id="CHEBI:15378"/>
        <dbReference type="ChEBI" id="CHEBI:15440"/>
        <dbReference type="ChEBI" id="CHEBI:33019"/>
        <dbReference type="ChEBI" id="CHEBI:57783"/>
        <dbReference type="ChEBI" id="CHEBI:58349"/>
        <dbReference type="ChEBI" id="CHEBI:175763"/>
        <dbReference type="EC" id="2.5.1.21"/>
    </reaction>
</comment>
<comment type="catalytic activity">
    <reaction>
        <text>2 (2E,6E)-farnesyl diphosphate + NADH + H(+) = squalene + 2 diphosphate + NAD(+)</text>
        <dbReference type="Rhea" id="RHEA:32299"/>
        <dbReference type="ChEBI" id="CHEBI:15378"/>
        <dbReference type="ChEBI" id="CHEBI:15440"/>
        <dbReference type="ChEBI" id="CHEBI:33019"/>
        <dbReference type="ChEBI" id="CHEBI:57540"/>
        <dbReference type="ChEBI" id="CHEBI:57945"/>
        <dbReference type="ChEBI" id="CHEBI:175763"/>
        <dbReference type="EC" id="2.5.1.21"/>
    </reaction>
</comment>
<comment type="cofactor">
    <cofactor evidence="1">
        <name>Mg(2+)</name>
        <dbReference type="ChEBI" id="CHEBI:18420"/>
    </cofactor>
</comment>
<comment type="pathway">
    <text>Terpene metabolism; lanosterol biosynthesis; lanosterol from farnesyl diphosphate: step 1/3.</text>
</comment>
<comment type="subcellular location">
    <subcellularLocation>
        <location evidence="1">Endoplasmic reticulum membrane</location>
        <topology evidence="1">Multi-pass membrane protein</topology>
    </subcellularLocation>
</comment>
<comment type="similarity">
    <text evidence="3">Belongs to the phytoene/squalene synthase family.</text>
</comment>
<evidence type="ECO:0000250" key="1"/>
<evidence type="ECO:0000255" key="2"/>
<evidence type="ECO:0000305" key="3"/>
<proteinExistence type="evidence at transcript level"/>
<keyword id="KW-0256">Endoplasmic reticulum</keyword>
<keyword id="KW-0414">Isoprene biosynthesis</keyword>
<keyword id="KW-0460">Magnesium</keyword>
<keyword id="KW-0472">Membrane</keyword>
<keyword id="KW-0511">Multifunctional enzyme</keyword>
<keyword id="KW-0521">NADP</keyword>
<keyword id="KW-0808">Transferase</keyword>
<keyword id="KW-0812">Transmembrane</keyword>
<keyword id="KW-1133">Transmembrane helix</keyword>
<organism>
    <name type="scientific">Nicotiana benthamiana</name>
    <dbReference type="NCBI Taxonomy" id="4100"/>
    <lineage>
        <taxon>Eukaryota</taxon>
        <taxon>Viridiplantae</taxon>
        <taxon>Streptophyta</taxon>
        <taxon>Embryophyta</taxon>
        <taxon>Tracheophyta</taxon>
        <taxon>Spermatophyta</taxon>
        <taxon>Magnoliopsida</taxon>
        <taxon>eudicotyledons</taxon>
        <taxon>Gunneridae</taxon>
        <taxon>Pentapetalae</taxon>
        <taxon>asterids</taxon>
        <taxon>lamiids</taxon>
        <taxon>Solanales</taxon>
        <taxon>Solanaceae</taxon>
        <taxon>Nicotianoideae</taxon>
        <taxon>Nicotianeae</taxon>
        <taxon>Nicotiana</taxon>
    </lineage>
</organism>
<dbReference type="EC" id="2.5.1.21"/>
<dbReference type="EMBL" id="U46000">
    <property type="protein sequence ID" value="AAA87048.1"/>
    <property type="molecule type" value="mRNA"/>
</dbReference>
<dbReference type="PIR" id="S71771">
    <property type="entry name" value="S71771"/>
</dbReference>
<dbReference type="SMR" id="P53800"/>
<dbReference type="UniPathway" id="UPA00767">
    <property type="reaction ID" value="UER00751"/>
</dbReference>
<dbReference type="GO" id="GO:0005789">
    <property type="term" value="C:endoplasmic reticulum membrane"/>
    <property type="evidence" value="ECO:0007669"/>
    <property type="project" value="UniProtKB-SubCell"/>
</dbReference>
<dbReference type="GO" id="GO:0051996">
    <property type="term" value="F:squalene synthase [NAD(P)H] activity"/>
    <property type="evidence" value="ECO:0007669"/>
    <property type="project" value="UniProtKB-EC"/>
</dbReference>
<dbReference type="GO" id="GO:0045338">
    <property type="term" value="P:farnesyl diphosphate metabolic process"/>
    <property type="evidence" value="ECO:0007669"/>
    <property type="project" value="InterPro"/>
</dbReference>
<dbReference type="GO" id="GO:0008299">
    <property type="term" value="P:isoprenoid biosynthetic process"/>
    <property type="evidence" value="ECO:0007669"/>
    <property type="project" value="UniProtKB-KW"/>
</dbReference>
<dbReference type="CDD" id="cd00683">
    <property type="entry name" value="Trans_IPPS_HH"/>
    <property type="match status" value="1"/>
</dbReference>
<dbReference type="FunFam" id="1.10.600.10:FF:000012">
    <property type="entry name" value="Squalene synthase 1"/>
    <property type="match status" value="1"/>
</dbReference>
<dbReference type="Gene3D" id="1.10.600.10">
    <property type="entry name" value="Farnesyl Diphosphate Synthase"/>
    <property type="match status" value="1"/>
</dbReference>
<dbReference type="InterPro" id="IPR008949">
    <property type="entry name" value="Isoprenoid_synthase_dom_sf"/>
</dbReference>
<dbReference type="InterPro" id="IPR002060">
    <property type="entry name" value="Squ/phyt_synthse"/>
</dbReference>
<dbReference type="InterPro" id="IPR006449">
    <property type="entry name" value="Squal_synth-like"/>
</dbReference>
<dbReference type="InterPro" id="IPR019845">
    <property type="entry name" value="Squalene/phytoene_synthase_CS"/>
</dbReference>
<dbReference type="InterPro" id="IPR044844">
    <property type="entry name" value="Trans_IPPS_euk-type"/>
</dbReference>
<dbReference type="InterPro" id="IPR033904">
    <property type="entry name" value="Trans_IPPS_HH"/>
</dbReference>
<dbReference type="NCBIfam" id="TIGR01559">
    <property type="entry name" value="squal_synth"/>
    <property type="match status" value="1"/>
</dbReference>
<dbReference type="PANTHER" id="PTHR11626">
    <property type="entry name" value="FARNESYL-DIPHOSPHATE FARNESYLTRANSFERASE"/>
    <property type="match status" value="1"/>
</dbReference>
<dbReference type="PANTHER" id="PTHR11626:SF2">
    <property type="entry name" value="SQUALENE SYNTHASE"/>
    <property type="match status" value="1"/>
</dbReference>
<dbReference type="Pfam" id="PF00494">
    <property type="entry name" value="SQS_PSY"/>
    <property type="match status" value="1"/>
</dbReference>
<dbReference type="SFLD" id="SFLDS00005">
    <property type="entry name" value="Isoprenoid_Synthase_Type_I"/>
    <property type="match status" value="1"/>
</dbReference>
<dbReference type="SFLD" id="SFLDG01018">
    <property type="entry name" value="Squalene/Phytoene_Synthase_Lik"/>
    <property type="match status" value="1"/>
</dbReference>
<dbReference type="SUPFAM" id="SSF48576">
    <property type="entry name" value="Terpenoid synthases"/>
    <property type="match status" value="1"/>
</dbReference>
<dbReference type="PROSITE" id="PS01044">
    <property type="entry name" value="SQUALEN_PHYTOEN_SYN_1"/>
    <property type="match status" value="1"/>
</dbReference>
<dbReference type="PROSITE" id="PS01045">
    <property type="entry name" value="SQUALEN_PHYTOEN_SYN_2"/>
    <property type="match status" value="1"/>
</dbReference>
<sequence length="411" mass="47083">MGSLRAILKNPEDLYPLVKLKLAARHAEKQIPPSPNWGFCYSMLHKVSRSFALVIQQLPVELRDAVCIFYLVLRALDTVEDDTSIPTDVKVPILISFHQHVYDREWHFSCGTKEYKVLMDQFHHVSTAFLELRKHYQQAIEDITMRMGAGMAKFICKEVETTDDYDEYCHYVAGLVGLGLSKLFHASEKEDLASDSLSNSMGLFLQKTNIIRDYLEDINEVPKCRMFWPREIWSKYVNKLEELKYEDNSAKAVQCLNDMVTNALPHVEDCLTYMSALRDPSIFRFCAIPQVMAIGTLAMCYDNIEVFRGVVKMRRGLTAKVIDRTRTIADVYGAFFDFSCMLKSKVNNNDPNATKTLKRLEVILKTCRDSGTLNKRKSYIIRSEPNYSPVLIVVIFIILAIILAQLSGNRS</sequence>
<reference key="1">
    <citation type="journal article" date="1996" name="Plant Mol. Biol.">
        <title>Molecular cloning, in vitro expression and characterization of a plant squalene synthetase cDNA.</title>
        <authorList>
            <person name="Hanley K.M."/>
            <person name="Nicolas O."/>
            <person name="Donaldson T.B."/>
            <person name="Smith-Monroy C."/>
            <person name="Robinson G.W."/>
            <person name="Hellmann G.M."/>
        </authorList>
    </citation>
    <scope>NUCLEOTIDE SEQUENCE [MRNA]</scope>
</reference>
<accession>P53800</accession>
<name>FDFT_NICBE</name>
<protein>
    <recommendedName>
        <fullName>Squalene synthase</fullName>
        <shortName>SQS</shortName>
        <shortName>SS</shortName>
        <ecNumber>2.5.1.21</ecNumber>
    </recommendedName>
    <alternativeName>
        <fullName>FPP:FPP farnesyltransferase</fullName>
    </alternativeName>
    <alternativeName>
        <fullName>Farnesyl-diphosphate farnesyltransferase</fullName>
    </alternativeName>
</protein>